<dbReference type="EC" id="2.7.11.30"/>
<dbReference type="EMBL" id="L23110">
    <property type="protein sequence ID" value="AAA03544.1"/>
    <property type="molecule type" value="mRNA"/>
</dbReference>
<dbReference type="EMBL" id="BX284603">
    <property type="protein sequence ID" value="CCD63118.1"/>
    <property type="molecule type" value="Genomic_DNA"/>
</dbReference>
<dbReference type="PIR" id="D88462">
    <property type="entry name" value="D88462"/>
</dbReference>
<dbReference type="PIR" id="S38279">
    <property type="entry name" value="S38279"/>
</dbReference>
<dbReference type="RefSeq" id="NP_498211.1">
    <property type="nucleotide sequence ID" value="NM_065810.8"/>
</dbReference>
<dbReference type="SMR" id="P50488"/>
<dbReference type="BioGRID" id="41009">
    <property type="interactions" value="19"/>
</dbReference>
<dbReference type="FunCoup" id="P50488">
    <property type="interactions" value="1612"/>
</dbReference>
<dbReference type="IntAct" id="P50488">
    <property type="interactions" value="14"/>
</dbReference>
<dbReference type="MINT" id="P50488"/>
<dbReference type="STRING" id="6239.C05D2.1a.2"/>
<dbReference type="GlyCosmos" id="P50488">
    <property type="glycosylation" value="3 sites, No reported glycans"/>
</dbReference>
<dbReference type="iPTMnet" id="P50488"/>
<dbReference type="PaxDb" id="6239-C05D2.1a"/>
<dbReference type="PeptideAtlas" id="P50488"/>
<dbReference type="EnsemblMetazoa" id="C05D2.1a.1">
    <property type="protein sequence ID" value="C05D2.1a.1"/>
    <property type="gene ID" value="WBGene00000900"/>
</dbReference>
<dbReference type="GeneID" id="175781"/>
<dbReference type="KEGG" id="cel:CELE_C05D2.1"/>
<dbReference type="UCSC" id="C05D2.1a.1">
    <property type="organism name" value="c. elegans"/>
</dbReference>
<dbReference type="AGR" id="WB:WBGene00000900"/>
<dbReference type="CTD" id="175781"/>
<dbReference type="WormBase" id="C05D2.1a">
    <property type="protein sequence ID" value="CE16827"/>
    <property type="gene ID" value="WBGene00000900"/>
    <property type="gene designation" value="daf-4"/>
</dbReference>
<dbReference type="eggNOG" id="KOG3653">
    <property type="taxonomic scope" value="Eukaryota"/>
</dbReference>
<dbReference type="InParanoid" id="P50488"/>
<dbReference type="OMA" id="AMDVYSM"/>
<dbReference type="OrthoDB" id="547665at2759"/>
<dbReference type="BRENDA" id="2.7.10.2">
    <property type="organism ID" value="1045"/>
</dbReference>
<dbReference type="Reactome" id="R-CEL-201451">
    <property type="pathway name" value="Signaling by BMP"/>
</dbReference>
<dbReference type="Reactome" id="R-CEL-2173788">
    <property type="pathway name" value="Downregulation of TGF-beta receptor signaling"/>
</dbReference>
<dbReference type="Reactome" id="R-CEL-2173789">
    <property type="pathway name" value="TGF-beta receptor signaling activates SMADs"/>
</dbReference>
<dbReference type="Reactome" id="R-CEL-2173791">
    <property type="pathway name" value="TGF-beta receptor signaling in EMT (epithelial to mesenchymal transition)"/>
</dbReference>
<dbReference type="Reactome" id="R-CEL-9839389">
    <property type="pathway name" value="TGFBR3 regulates TGF-beta signaling"/>
</dbReference>
<dbReference type="SignaLink" id="P50488"/>
<dbReference type="PRO" id="PR:P50488"/>
<dbReference type="Proteomes" id="UP000001940">
    <property type="component" value="Chromosome III"/>
</dbReference>
<dbReference type="Bgee" id="WBGene00000900">
    <property type="expression patterns" value="Expressed in larva and 4 other cell types or tissues"/>
</dbReference>
<dbReference type="ExpressionAtlas" id="P50488">
    <property type="expression patterns" value="baseline and differential"/>
</dbReference>
<dbReference type="GO" id="GO:0005886">
    <property type="term" value="C:plasma membrane"/>
    <property type="evidence" value="ECO:0000314"/>
    <property type="project" value="WormBase"/>
</dbReference>
<dbReference type="GO" id="GO:0043235">
    <property type="term" value="C:receptor complex"/>
    <property type="evidence" value="ECO:0000318"/>
    <property type="project" value="GO_Central"/>
</dbReference>
<dbReference type="GO" id="GO:0005524">
    <property type="term" value="F:ATP binding"/>
    <property type="evidence" value="ECO:0007669"/>
    <property type="project" value="UniProtKB-KW"/>
</dbReference>
<dbReference type="GO" id="GO:0036122">
    <property type="term" value="F:BMP binding"/>
    <property type="evidence" value="ECO:0000353"/>
    <property type="project" value="WormBase"/>
</dbReference>
<dbReference type="GO" id="GO:0005024">
    <property type="term" value="F:transforming growth factor beta receptor activity"/>
    <property type="evidence" value="ECO:0000318"/>
    <property type="project" value="GO_Central"/>
</dbReference>
<dbReference type="GO" id="GO:0004675">
    <property type="term" value="F:transmembrane receptor protein serine/threonine kinase activity"/>
    <property type="evidence" value="ECO:0000250"/>
    <property type="project" value="WormBase"/>
</dbReference>
<dbReference type="GO" id="GO:0030509">
    <property type="term" value="P:BMP signaling pathway"/>
    <property type="evidence" value="ECO:0000318"/>
    <property type="project" value="GO_Central"/>
</dbReference>
<dbReference type="GO" id="GO:0071363">
    <property type="term" value="P:cellular response to growth factor stimulus"/>
    <property type="evidence" value="ECO:0000318"/>
    <property type="project" value="GO_Central"/>
</dbReference>
<dbReference type="GO" id="GO:0043053">
    <property type="term" value="P:dauer entry"/>
    <property type="evidence" value="ECO:0000316"/>
    <property type="project" value="UniProtKB"/>
</dbReference>
<dbReference type="GO" id="GO:0040024">
    <property type="term" value="P:dauer larval development"/>
    <property type="evidence" value="ECO:0000315"/>
    <property type="project" value="WormBase"/>
</dbReference>
<dbReference type="GO" id="GO:0050832">
    <property type="term" value="P:defense response to fungus"/>
    <property type="evidence" value="ECO:0000315"/>
    <property type="project" value="WormBase"/>
</dbReference>
<dbReference type="GO" id="GO:0008340">
    <property type="term" value="P:determination of adult lifespan"/>
    <property type="evidence" value="ECO:0000315"/>
    <property type="project" value="WormBase"/>
</dbReference>
<dbReference type="GO" id="GO:0018991">
    <property type="term" value="P:egg-laying behavior"/>
    <property type="evidence" value="ECO:0000315"/>
    <property type="project" value="WormBase"/>
</dbReference>
<dbReference type="GO" id="GO:0045087">
    <property type="term" value="P:innate immune response"/>
    <property type="evidence" value="ECO:0000315"/>
    <property type="project" value="WormBase"/>
</dbReference>
<dbReference type="GO" id="GO:0030536">
    <property type="term" value="P:larval feeding behavior"/>
    <property type="evidence" value="ECO:0000315"/>
    <property type="project" value="UniProtKB"/>
</dbReference>
<dbReference type="GO" id="GO:0030514">
    <property type="term" value="P:negative regulation of BMP signaling pathway"/>
    <property type="evidence" value="ECO:0000315"/>
    <property type="project" value="WormBase"/>
</dbReference>
<dbReference type="GO" id="GO:0061067">
    <property type="term" value="P:negative regulation of dauer larval development"/>
    <property type="evidence" value="ECO:0000315"/>
    <property type="project" value="WormBase"/>
</dbReference>
<dbReference type="GO" id="GO:0002119">
    <property type="term" value="P:nematode larval development"/>
    <property type="evidence" value="ECO:0000315"/>
    <property type="project" value="WormBase"/>
</dbReference>
<dbReference type="GO" id="GO:0030513">
    <property type="term" value="P:positive regulation of BMP signaling pathway"/>
    <property type="evidence" value="ECO:0000315"/>
    <property type="project" value="WormBase"/>
</dbReference>
<dbReference type="GO" id="GO:0040018">
    <property type="term" value="P:positive regulation of multicellular organism growth"/>
    <property type="evidence" value="ECO:0000315"/>
    <property type="project" value="WormBase"/>
</dbReference>
<dbReference type="GO" id="GO:0110039">
    <property type="term" value="P:positive regulation of nematode male tail tip morphogenesis"/>
    <property type="evidence" value="ECO:0000315"/>
    <property type="project" value="UniProtKB"/>
</dbReference>
<dbReference type="GO" id="GO:0045944">
    <property type="term" value="P:positive regulation of transcription by RNA polymerase II"/>
    <property type="evidence" value="ECO:0000315"/>
    <property type="project" value="WormBase"/>
</dbReference>
<dbReference type="GO" id="GO:0022604">
    <property type="term" value="P:regulation of cell morphogenesis"/>
    <property type="evidence" value="ECO:0000315"/>
    <property type="project" value="WormBase"/>
</dbReference>
<dbReference type="GO" id="GO:0061065">
    <property type="term" value="P:regulation of dauer larval development"/>
    <property type="evidence" value="ECO:0000315"/>
    <property type="project" value="UniProtKB"/>
</dbReference>
<dbReference type="GO" id="GO:1903998">
    <property type="term" value="P:regulation of eating behavior"/>
    <property type="evidence" value="ECO:0000315"/>
    <property type="project" value="UniProtKB"/>
</dbReference>
<dbReference type="GO" id="GO:0042661">
    <property type="term" value="P:regulation of mesodermal cell fate specification"/>
    <property type="evidence" value="ECO:0000316"/>
    <property type="project" value="UniProtKB"/>
</dbReference>
<dbReference type="CDD" id="cd23617">
    <property type="entry name" value="TFP_LU_ECD_Daf4"/>
    <property type="match status" value="1"/>
</dbReference>
<dbReference type="FunFam" id="1.10.510.10:FF:000487">
    <property type="entry name" value="Anti-Muellerian hormone type-2 receptor"/>
    <property type="match status" value="1"/>
</dbReference>
<dbReference type="FunFam" id="3.30.200.20:FF:000958">
    <property type="entry name" value="Receptor protein serine/threonine kinase"/>
    <property type="match status" value="1"/>
</dbReference>
<dbReference type="Gene3D" id="3.30.200.20">
    <property type="entry name" value="Phosphorylase Kinase, domain 1"/>
    <property type="match status" value="1"/>
</dbReference>
<dbReference type="Gene3D" id="1.10.510.10">
    <property type="entry name" value="Transferase(Phosphotransferase) domain 1"/>
    <property type="match status" value="1"/>
</dbReference>
<dbReference type="InterPro" id="IPR011009">
    <property type="entry name" value="Kinase-like_dom_sf"/>
</dbReference>
<dbReference type="InterPro" id="IPR000719">
    <property type="entry name" value="Prot_kinase_dom"/>
</dbReference>
<dbReference type="InterPro" id="IPR008271">
    <property type="entry name" value="Ser/Thr_kinase_AS"/>
</dbReference>
<dbReference type="InterPro" id="IPR045860">
    <property type="entry name" value="Snake_toxin-like_sf"/>
</dbReference>
<dbReference type="InterPro" id="IPR000333">
    <property type="entry name" value="TGFB_receptor"/>
</dbReference>
<dbReference type="PANTHER" id="PTHR23255:SF100">
    <property type="entry name" value="RECEPTOR PROTEIN SERINE_THREONINE KINASE"/>
    <property type="match status" value="1"/>
</dbReference>
<dbReference type="PANTHER" id="PTHR23255">
    <property type="entry name" value="TRANSFORMING GROWTH FACTOR-BETA RECEPTOR TYPE I AND II"/>
    <property type="match status" value="1"/>
</dbReference>
<dbReference type="Pfam" id="PF00069">
    <property type="entry name" value="Pkinase"/>
    <property type="match status" value="1"/>
</dbReference>
<dbReference type="SMART" id="SM00220">
    <property type="entry name" value="S_TKc"/>
    <property type="match status" value="1"/>
</dbReference>
<dbReference type="SUPFAM" id="SSF56112">
    <property type="entry name" value="Protein kinase-like (PK-like)"/>
    <property type="match status" value="1"/>
</dbReference>
<dbReference type="SUPFAM" id="SSF57302">
    <property type="entry name" value="Snake toxin-like"/>
    <property type="match status" value="1"/>
</dbReference>
<dbReference type="PROSITE" id="PS50011">
    <property type="entry name" value="PROTEIN_KINASE_DOM"/>
    <property type="match status" value="1"/>
</dbReference>
<dbReference type="PROSITE" id="PS00108">
    <property type="entry name" value="PROTEIN_KINASE_ST"/>
    <property type="match status" value="1"/>
</dbReference>
<sequence length="744" mass="84410">MNQKGTVRLKALVLICLPLFLIATPVPVAVTEDDRQDRIESEAAEKEWANTLVSKVAQSNGTGTIKVSAPAKPTLRRMDNEEDEVISIECVYYDEMECEKSGDCEITKKTCYSEAHLKAVGCLAVFGLPTQEINSTEPYLKVDKPQYKSLGCMPYQHADSMNCENESSCRQGRSFRGGIGMCCCSTNNCNMPDLIEMVNPSLKKDSDNSALLWASTPSNMDLESLDKFPFYWIIIIALSVILCIALLILAYVGWKFQQNKKEEIKKQQKIKFDMEKTDALEAGNVPLVEPEEEMIEMVETPKELPITDFQLISKGRFGKVFKAQYTPDSGEKRLVAVKKLNEFQKASFLAEKRIFDELNEYPKWYKSIVEFVCAEKIGDEYWIVTEFHERLSLYELLKNNVISITSANRIIMSMIDGLQFLHDDRPYFFGHPKKPIIHRDIKSKNILVKSDMTTCIADFGLARIYSYDIEQSDLLGQVGTKRYMSPEMLEGATEFTPTAFKAMDVYSMGLVMWEVISRTKLHQTDEPPNYQMPFQVIGFDPTIGLMRNYVVSKKERPQWRDEIIKHEYMSLLKKVTEEMWDPEACARITAGCAFARVWNHIMSSPDSSEGYHSGSSMKNRGVDDVEQSEKPEGIEEMQHYHASSPSKRQHPSPNPFFDSCPPPPPIPVILENGGILQPDNAEPEPEELPDLPIVEKIYDIATNMLFSREELDLMNAQRQVEYEAGADTRASTPTPSGTFGTFTT</sequence>
<comment type="function">
    <text evidence="5 7 8 10 11">Involved in a TGF-beta pathway (PubMed:8413626). May be a receptor for TGF-beta-like ligand daf-7 (PubMed:8413626). Controls the decision of whether or not larvae enter a developmentally arrested state, known as dauer, in response to environmental conditions (PubMed:8413626). Regulates body size and male tail patterning (PubMed:10887089, PubMed:21408209). Involved in regulating entry into quiescence triggered by satiety (PubMed:18316030). Involved in sensitivity to CO2 levels (PubMed:18524955).</text>
</comment>
<comment type="catalytic activity">
    <reaction>
        <text>L-threonyl-[receptor-protein] + ATP = O-phospho-L-threonyl-[receptor-protein] + ADP + H(+)</text>
        <dbReference type="Rhea" id="RHEA:44880"/>
        <dbReference type="Rhea" id="RHEA-COMP:11024"/>
        <dbReference type="Rhea" id="RHEA-COMP:11025"/>
        <dbReference type="ChEBI" id="CHEBI:15378"/>
        <dbReference type="ChEBI" id="CHEBI:30013"/>
        <dbReference type="ChEBI" id="CHEBI:30616"/>
        <dbReference type="ChEBI" id="CHEBI:61977"/>
        <dbReference type="ChEBI" id="CHEBI:456216"/>
        <dbReference type="EC" id="2.7.11.30"/>
    </reaction>
</comment>
<comment type="catalytic activity">
    <reaction>
        <text>L-seryl-[receptor-protein] + ATP = O-phospho-L-seryl-[receptor-protein] + ADP + H(+)</text>
        <dbReference type="Rhea" id="RHEA:18673"/>
        <dbReference type="Rhea" id="RHEA-COMP:11022"/>
        <dbReference type="Rhea" id="RHEA-COMP:11023"/>
        <dbReference type="ChEBI" id="CHEBI:15378"/>
        <dbReference type="ChEBI" id="CHEBI:29999"/>
        <dbReference type="ChEBI" id="CHEBI:30616"/>
        <dbReference type="ChEBI" id="CHEBI:83421"/>
        <dbReference type="ChEBI" id="CHEBI:456216"/>
        <dbReference type="EC" id="2.7.11.30"/>
    </reaction>
</comment>
<comment type="subunit">
    <text evidence="5 9">May interact with daf-1 to regulate dauer larva development (PubMed:10887089). Interacts with sma-10 (PubMed:20502686).</text>
</comment>
<comment type="interaction">
    <interactant intactId="EBI-296172">
        <id>P50488</id>
    </interactant>
    <interactant intactId="EBI-316294">
        <id>P46561</id>
        <label>atp-2</label>
    </interactant>
    <organismsDiffer>false</organismsDiffer>
    <experiments>2</experiments>
</comment>
<comment type="interaction">
    <interactant intactId="EBI-296172">
        <id>P50488</id>
    </interactant>
    <interactant intactId="EBI-312683">
        <id>O45799</id>
        <label>scrm-1</label>
    </interactant>
    <organismsDiffer>false</organismsDiffer>
    <experiments>2</experiments>
</comment>
<comment type="subcellular location">
    <subcellularLocation>
        <location evidence="10">Cell membrane</location>
        <topology evidence="1">Single-pass type I membrane protein</topology>
    </subcellularLocation>
</comment>
<comment type="tissue specificity">
    <text evidence="5">Pharynx, intestine, hypodermis and body wall muscles in L1 through to adult stages. Also expressed in head neurons, ventral cord and tail neurons. Subset of head neurons show coexpression with daf-1 when dauer/nondauer decision is made.</text>
</comment>
<comment type="disruption phenotype">
    <text evidence="10">RNAi-mediated knockdown disrupts tail tip morphogenesis resulting in retention of the pointed larval tail tip in adult males (also known as the Lep phenotype).</text>
</comment>
<comment type="similarity">
    <text evidence="12">Belongs to the protein kinase superfamily. TKL Ser/Thr protein kinase family. TGFB receptor subfamily.</text>
</comment>
<accession>P50488</accession>
<accession>O45139</accession>
<name>DAF4_CAEEL</name>
<feature type="signal peptide" evidence="1">
    <location>
        <begin position="1"/>
        <end position="31"/>
    </location>
</feature>
<feature type="chain" id="PRO_0000024431" description="Cell surface receptor daf-4">
    <location>
        <begin position="32"/>
        <end position="744"/>
    </location>
</feature>
<feature type="topological domain" description="Extracellular" evidence="1">
    <location>
        <begin position="48"/>
        <end position="253"/>
    </location>
</feature>
<feature type="transmembrane region" description="Helical" evidence="1">
    <location>
        <begin position="254"/>
        <end position="274"/>
    </location>
</feature>
<feature type="topological domain" description="Cytoplasmic" evidence="1">
    <location>
        <begin position="275"/>
        <end position="744"/>
    </location>
</feature>
<feature type="domain" description="Protein kinase" evidence="2">
    <location>
        <begin position="306"/>
        <end position="603"/>
    </location>
</feature>
<feature type="region of interest" description="Disordered" evidence="4">
    <location>
        <begin position="605"/>
        <end position="686"/>
    </location>
</feature>
<feature type="region of interest" description="Disordered" evidence="4">
    <location>
        <begin position="724"/>
        <end position="744"/>
    </location>
</feature>
<feature type="compositionally biased region" description="Basic and acidic residues" evidence="4">
    <location>
        <begin position="620"/>
        <end position="639"/>
    </location>
</feature>
<feature type="compositionally biased region" description="Low complexity" evidence="4">
    <location>
        <begin position="731"/>
        <end position="744"/>
    </location>
</feature>
<feature type="active site" description="Proton acceptor" evidence="2 3">
    <location>
        <position position="440"/>
    </location>
</feature>
<feature type="binding site" evidence="2">
    <location>
        <begin position="312"/>
        <end position="320"/>
    </location>
    <ligand>
        <name>ATP</name>
        <dbReference type="ChEBI" id="CHEBI:30616"/>
    </ligand>
</feature>
<feature type="binding site" evidence="2">
    <location>
        <position position="338"/>
    </location>
    <ligand>
        <name>ATP</name>
        <dbReference type="ChEBI" id="CHEBI:30616"/>
    </ligand>
</feature>
<feature type="glycosylation site" description="N-linked (GlcNAc...) asparagine" evidence="6">
    <location>
        <position position="60"/>
    </location>
</feature>
<feature type="glycosylation site" description="N-linked (GlcNAc...) asparagine" evidence="6">
    <location>
        <position position="134"/>
    </location>
</feature>
<feature type="glycosylation site" description="N-linked (GlcNAc...) asparagine" evidence="1">
    <location>
        <position position="165"/>
    </location>
</feature>
<feature type="sequence conflict" description="In Ref. 1; AAA03544." evidence="12" ref="1">
    <original>A</original>
    <variation>P</variation>
    <location>
        <position position="374"/>
    </location>
</feature>
<feature type="sequence conflict" description="In Ref. 1; AAA03544." evidence="12" ref="1">
    <original>L</original>
    <variation>R</variation>
    <location>
        <position position="545"/>
    </location>
</feature>
<protein>
    <recommendedName>
        <fullName>Cell surface receptor daf-4</fullName>
        <ecNumber>2.7.11.30</ecNumber>
    </recommendedName>
    <alternativeName>
        <fullName>Abnormal dauer formation protein 4</fullName>
    </alternativeName>
</protein>
<reference key="1">
    <citation type="journal article" date="1993" name="Nature">
        <title>The daf-4 gene encodes a bone morphogenetic protein receptor controlling C. elegans dauer larva development.</title>
        <authorList>
            <person name="Estevez M."/>
            <person name="Attisano L."/>
            <person name="Wrana J.L."/>
            <person name="Albert P.S."/>
            <person name="Massague J."/>
            <person name="Riddle D.L."/>
        </authorList>
    </citation>
    <scope>NUCLEOTIDE SEQUENCE [MRNA]</scope>
    <scope>FUNCTION</scope>
</reference>
<reference key="2">
    <citation type="journal article" date="1998" name="Science">
        <title>Genome sequence of the nematode C. elegans: a platform for investigating biology.</title>
        <authorList>
            <consortium name="The C. elegans sequencing consortium"/>
        </authorList>
    </citation>
    <scope>NUCLEOTIDE SEQUENCE [LARGE SCALE GENOMIC DNA]</scope>
    <source>
        <strain>Bristol N2</strain>
    </source>
</reference>
<reference key="3">
    <citation type="journal article" date="2000" name="Development">
        <title>A Caenorhabditis elegans type I TGF beta receptor can function in the absence of type II kinase to promote larval development.</title>
        <authorList>
            <person name="Gunther C.V."/>
            <person name="Georgi L.L."/>
            <person name="Riddle D.L."/>
        </authorList>
    </citation>
    <scope>FUNCTION</scope>
    <scope>SUBUNIT</scope>
    <scope>TISSUE SPECIFICITY</scope>
    <scope>DEVELOPMENTAL STAGE</scope>
</reference>
<reference key="4">
    <citation type="journal article" date="2007" name="Mol. Cell. Proteomics">
        <title>Proteomics reveals N-linked glycoprotein diversity in Caenorhabditis elegans and suggests an atypical translocation mechanism for integral membrane proteins.</title>
        <authorList>
            <person name="Kaji H."/>
            <person name="Kamiie J."/>
            <person name="Kawakami H."/>
            <person name="Kido K."/>
            <person name="Yamauchi Y."/>
            <person name="Shinkawa T."/>
            <person name="Taoka M."/>
            <person name="Takahashi N."/>
            <person name="Isobe T."/>
        </authorList>
    </citation>
    <scope>GLYCOSYLATION [LARGE SCALE ANALYSIS] AT ASN-60 AND ASN-134</scope>
    <scope>IDENTIFICATION BY MASS SPECTROMETRY</scope>
    <source>
        <strain>Bristol N2</strain>
    </source>
</reference>
<reference key="5">
    <citation type="journal article" date="2008" name="Cell Metab.">
        <title>Insulin, cGMP, and TGF-beta signals regulate food intake and quiescence in C. elegans: a model for satiety.</title>
        <authorList>
            <person name="You Y.J."/>
            <person name="Kim J."/>
            <person name="Raizen D.M."/>
            <person name="Avery L."/>
        </authorList>
    </citation>
    <scope>FUNCTION</scope>
</reference>
<reference key="6">
    <citation type="journal article" date="2008" name="Proc. Natl. Acad. Sci. U.S.A.">
        <title>Acute carbon dioxide avoidance in Caenorhabditis elegans.</title>
        <authorList>
            <person name="Hallem E.A."/>
            <person name="Sternberg P.W."/>
        </authorList>
    </citation>
    <scope>FUNCTION</scope>
</reference>
<reference key="7">
    <citation type="journal article" date="2010" name="PLoS Genet.">
        <title>Caenorhabditis elegans SMA-10/LRIG is a conserved transmembrane protein that enhances bone morphogenetic protein signaling.</title>
        <authorList>
            <person name="Gumienny T.L."/>
            <person name="Macneil L."/>
            <person name="Zimmerman C.M."/>
            <person name="Wang H."/>
            <person name="Chin L."/>
            <person name="Wrana J.L."/>
            <person name="Padgett R.W."/>
        </authorList>
    </citation>
    <scope>INTERACTION WITH SMA-10</scope>
</reference>
<reference key="8">
    <citation type="journal article" date="2011" name="PLoS Genet.">
        <title>A bow-tie genetic architecture for morphogenesis suggested by a genome-wide RNAi screen in Caenorhabditis elegans.</title>
        <authorList>
            <person name="Nelson M.D."/>
            <person name="Zhou E."/>
            <person name="Kiontke K."/>
            <person name="Fradin H."/>
            <person name="Maldonado G."/>
            <person name="Martin D."/>
            <person name="Shah K."/>
            <person name="Fitch D.H."/>
        </authorList>
    </citation>
    <scope>FUNCTION</scope>
    <scope>SUBCELLULAR LOCATION</scope>
    <scope>DISRUPTION PHENOTYPE</scope>
</reference>
<proteinExistence type="evidence at protein level"/>
<evidence type="ECO:0000255" key="1"/>
<evidence type="ECO:0000255" key="2">
    <source>
        <dbReference type="PROSITE-ProRule" id="PRU00159"/>
    </source>
</evidence>
<evidence type="ECO:0000255" key="3">
    <source>
        <dbReference type="PROSITE-ProRule" id="PRU10027"/>
    </source>
</evidence>
<evidence type="ECO:0000256" key="4">
    <source>
        <dbReference type="SAM" id="MobiDB-lite"/>
    </source>
</evidence>
<evidence type="ECO:0000269" key="5">
    <source>
    </source>
</evidence>
<evidence type="ECO:0000269" key="6">
    <source>
    </source>
</evidence>
<evidence type="ECO:0000269" key="7">
    <source>
    </source>
</evidence>
<evidence type="ECO:0000269" key="8">
    <source>
    </source>
</evidence>
<evidence type="ECO:0000269" key="9">
    <source>
    </source>
</evidence>
<evidence type="ECO:0000269" key="10">
    <source>
    </source>
</evidence>
<evidence type="ECO:0000269" key="11">
    <source>
    </source>
</evidence>
<evidence type="ECO:0000305" key="12"/>
<evidence type="ECO:0000312" key="13">
    <source>
        <dbReference type="WormBase" id="C05D2.1a"/>
    </source>
</evidence>
<organism>
    <name type="scientific">Caenorhabditis elegans</name>
    <dbReference type="NCBI Taxonomy" id="6239"/>
    <lineage>
        <taxon>Eukaryota</taxon>
        <taxon>Metazoa</taxon>
        <taxon>Ecdysozoa</taxon>
        <taxon>Nematoda</taxon>
        <taxon>Chromadorea</taxon>
        <taxon>Rhabditida</taxon>
        <taxon>Rhabditina</taxon>
        <taxon>Rhabditomorpha</taxon>
        <taxon>Rhabditoidea</taxon>
        <taxon>Rhabditidae</taxon>
        <taxon>Peloderinae</taxon>
        <taxon>Caenorhabditis</taxon>
    </lineage>
</organism>
<keyword id="KW-0067">ATP-binding</keyword>
<keyword id="KW-1003">Cell membrane</keyword>
<keyword id="KW-0217">Developmental protein</keyword>
<keyword id="KW-0325">Glycoprotein</keyword>
<keyword id="KW-0418">Kinase</keyword>
<keyword id="KW-0472">Membrane</keyword>
<keyword id="KW-0547">Nucleotide-binding</keyword>
<keyword id="KW-0675">Receptor</keyword>
<keyword id="KW-1185">Reference proteome</keyword>
<keyword id="KW-0723">Serine/threonine-protein kinase</keyword>
<keyword id="KW-0732">Signal</keyword>
<keyword id="KW-0808">Transferase</keyword>
<keyword id="KW-0812">Transmembrane</keyword>
<keyword id="KW-1133">Transmembrane helix</keyword>
<gene>
    <name evidence="13" type="primary">daf-4</name>
    <name evidence="13" type="ORF">C05D2.1</name>
</gene>